<feature type="chain" id="PRO_0000145423" description="DNA topoisomerase 4 subunit A">
    <location>
        <begin position="1"/>
        <end position="920"/>
    </location>
</feature>
<feature type="domain" description="Topo IIA-type catalytic" evidence="2">
    <location>
        <begin position="37"/>
        <end position="509"/>
    </location>
</feature>
<feature type="region of interest" description="Disordered" evidence="3">
    <location>
        <begin position="499"/>
        <end position="566"/>
    </location>
</feature>
<feature type="compositionally biased region" description="Acidic residues" evidence="3">
    <location>
        <begin position="528"/>
        <end position="540"/>
    </location>
</feature>
<feature type="active site" description="O-(5'-phospho-DNA)-tyrosine intermediate" evidence="2">
    <location>
        <position position="125"/>
    </location>
</feature>
<feature type="site" description="Interaction with DNA" evidence="1">
    <location>
        <position position="45"/>
    </location>
</feature>
<feature type="site" description="Interaction with DNA" evidence="1">
    <location>
        <position position="81"/>
    </location>
</feature>
<feature type="site" description="Interaction with DNA" evidence="1">
    <location>
        <position position="83"/>
    </location>
</feature>
<feature type="site" description="Transition state stabilizer" evidence="1">
    <location>
        <position position="124"/>
    </location>
</feature>
<feature type="sequence conflict" description="In Ref. 2; AAA80683." evidence="4" ref="2">
    <original>R</original>
    <variation>D</variation>
    <location>
        <position position="35"/>
    </location>
</feature>
<evidence type="ECO:0000250" key="1"/>
<evidence type="ECO:0000255" key="2">
    <source>
        <dbReference type="PROSITE-ProRule" id="PRU01384"/>
    </source>
</evidence>
<evidence type="ECO:0000256" key="3">
    <source>
        <dbReference type="SAM" id="MobiDB-lite"/>
    </source>
</evidence>
<evidence type="ECO:0000305" key="4"/>
<keyword id="KW-1003">Cell membrane</keyword>
<keyword id="KW-0238">DNA-binding</keyword>
<keyword id="KW-0413">Isomerase</keyword>
<keyword id="KW-0472">Membrane</keyword>
<keyword id="KW-1185">Reference proteome</keyword>
<keyword id="KW-0799">Topoisomerase</keyword>
<name>PARC_SYNY3</name>
<gene>
    <name type="primary">parC</name>
    <name type="ordered locus">sll1941</name>
</gene>
<accession>P73077</accession>
<accession>Q59945</accession>
<comment type="function">
    <text evidence="1">Topoisomerase IV is essential for chromosome segregation. It relaxes supercoiled DNA. Performs the decatenation events required during the replication of a circular DNA molecule (By similarity).</text>
</comment>
<comment type="catalytic activity">
    <reaction evidence="2">
        <text>ATP-dependent breakage, passage and rejoining of double-stranded DNA.</text>
        <dbReference type="EC" id="5.6.2.2"/>
    </reaction>
</comment>
<comment type="subunit">
    <text evidence="1">Heterotetramer composed of ParC and ParE.</text>
</comment>
<comment type="subcellular location">
    <subcellularLocation>
        <location evidence="1">Cell membrane</location>
        <topology evidence="1">Peripheral membrane protein</topology>
    </subcellularLocation>
</comment>
<comment type="similarity">
    <text evidence="4">Belongs to the type II topoisomerase GyrA/ParC subunit family.</text>
</comment>
<comment type="sequence caution" evidence="4">
    <conflict type="erroneous initiation">
        <sequence resource="EMBL-CDS" id="BAA17102"/>
    </conflict>
    <text>Extended N-terminus.</text>
</comment>
<sequence length="920" mass="101163">MARKSFPSGQIIPTDLHEEMERSYLEYAMSVIVGRALPDVRDGLKPVHRRILYAMYELGLTPDRPFRKCARVVGDVLGKYHPHGDQSVYDALVRMVQDFSSRYPLLAGHGNFGSVDNDPPAAMRYTETRLAPIAMGAMLEGISEAIVDFTGNFDNSQEEPTVVPAQLPLLLLNGCSGIAVGMATSIPPHNLGEVVDGLIGLINKPDLSDQELFKLIPGPDFPTGGHILDSEGILQAYQTGRGLIPVRGVSHIETIRGEKKRSHNRTAIVITELPFQVNKAAWIEKIASLVNDGKLDGISDLRDESDRTGMRVVIELKRDAEPNAILQKLYRMTPLQSNFGVIFLALVNNQPVQMSLRQILQEFLQFREDTLLRQYENELGENRRRLELLTGLLIGLENLDALIEILRFAADGTTAKIQLQERLGISLQQGDAILGMPMRRITGLEREKLQQEHTDLAQRIEQLETLIGDRQERLKALKKELRGLKKKFADERRTKILQGMPAKIEPLPVNQDPLPEATIPPVESQSAPEEELDSPGEPEQEQLVLENSSPPTADSAPEAKQDDLNLAVKPTPKTVKQEAQPSPEVIATHSKLVSVAEKNPLTLFTPQTPPAEAFLSINLQGEIAWHPEELTSANSFEPLDQQFSIQGRETLIVIGDHGKAFPVAIADIPPLAVTRIPLLQILPKSAQRDATTVTFQGFLPPPEQPQDLLLVSQQGRVKLLAGQELQELGPRGLSLMKLKNGDLLQFAQLVTPVNPASAQNPGKNLVIATSNGRLLRFDPAQVGLTCSSPSAQGQEAMRLRATESLVGVLMASPGDRVLLLTQAGYGKQLDLASVRLGNFGELGTTVMQFTSKADRLLTMVAANQGAQSPQSSTYDFYSNQQRLHSVQADQFQPWGKDGFGDRLVDLNEGEHLITQVAHLG</sequence>
<proteinExistence type="inferred from homology"/>
<reference key="1">
    <citation type="journal article" date="1996" name="DNA Res.">
        <title>Sequence analysis of the genome of the unicellular cyanobacterium Synechocystis sp. strain PCC6803. II. Sequence determination of the entire genome and assignment of potential protein-coding regions.</title>
        <authorList>
            <person name="Kaneko T."/>
            <person name="Sato S."/>
            <person name="Kotani H."/>
            <person name="Tanaka A."/>
            <person name="Asamizu E."/>
            <person name="Nakamura Y."/>
            <person name="Miyajima N."/>
            <person name="Hirosawa M."/>
            <person name="Sugiura M."/>
            <person name="Sasamoto S."/>
            <person name="Kimura T."/>
            <person name="Hosouchi T."/>
            <person name="Matsuno A."/>
            <person name="Muraki A."/>
            <person name="Nakazaki N."/>
            <person name="Naruo K."/>
            <person name="Okumura S."/>
            <person name="Shimpo S."/>
            <person name="Takeuchi C."/>
            <person name="Wada T."/>
            <person name="Watanabe A."/>
            <person name="Yamada M."/>
            <person name="Yasuda M."/>
            <person name="Tabata S."/>
        </authorList>
    </citation>
    <scope>NUCLEOTIDE SEQUENCE [LARGE SCALE GENOMIC DNA]</scope>
    <source>
        <strain>ATCC 27184 / PCC 6803 / Kazusa</strain>
    </source>
</reference>
<reference key="2">
    <citation type="submission" date="1995-10" db="EMBL/GenBank/DDBJ databases">
        <authorList>
            <person name="Los D.A."/>
            <person name="Murata N."/>
        </authorList>
    </citation>
    <scope>NUCLEOTIDE SEQUENCE [GENOMIC DNA] OF 35-105</scope>
</reference>
<dbReference type="EC" id="5.6.2.2" evidence="2"/>
<dbReference type="EMBL" id="BA000022">
    <property type="protein sequence ID" value="BAA17102.1"/>
    <property type="status" value="ALT_INIT"/>
    <property type="molecule type" value="Genomic_DNA"/>
</dbReference>
<dbReference type="EMBL" id="U38531">
    <property type="protein sequence ID" value="AAA80683.1"/>
    <property type="molecule type" value="Genomic_DNA"/>
</dbReference>
<dbReference type="PIR" id="S75188">
    <property type="entry name" value="S75188"/>
</dbReference>
<dbReference type="SMR" id="P73077"/>
<dbReference type="STRING" id="1148.gene:10497963"/>
<dbReference type="PaxDb" id="1148-1652178"/>
<dbReference type="EnsemblBacteria" id="BAA17102">
    <property type="protein sequence ID" value="BAA17102"/>
    <property type="gene ID" value="BAA17102"/>
</dbReference>
<dbReference type="KEGG" id="syn:sll1941"/>
<dbReference type="eggNOG" id="COG0188">
    <property type="taxonomic scope" value="Bacteria"/>
</dbReference>
<dbReference type="InParanoid" id="P73077"/>
<dbReference type="PhylomeDB" id="P73077"/>
<dbReference type="Proteomes" id="UP000001425">
    <property type="component" value="Chromosome"/>
</dbReference>
<dbReference type="GO" id="GO:0005737">
    <property type="term" value="C:cytoplasm"/>
    <property type="evidence" value="ECO:0000318"/>
    <property type="project" value="GO_Central"/>
</dbReference>
<dbReference type="GO" id="GO:0009330">
    <property type="term" value="C:DNA topoisomerase type II (double strand cut, ATP-hydrolyzing) complex"/>
    <property type="evidence" value="ECO:0000318"/>
    <property type="project" value="GO_Central"/>
</dbReference>
<dbReference type="GO" id="GO:0005886">
    <property type="term" value="C:plasma membrane"/>
    <property type="evidence" value="ECO:0007669"/>
    <property type="project" value="UniProtKB-SubCell"/>
</dbReference>
<dbReference type="GO" id="GO:0005524">
    <property type="term" value="F:ATP binding"/>
    <property type="evidence" value="ECO:0000318"/>
    <property type="project" value="GO_Central"/>
</dbReference>
<dbReference type="GO" id="GO:0003677">
    <property type="term" value="F:DNA binding"/>
    <property type="evidence" value="ECO:0000318"/>
    <property type="project" value="GO_Central"/>
</dbReference>
<dbReference type="GO" id="GO:0034335">
    <property type="term" value="F:DNA negative supercoiling activity"/>
    <property type="evidence" value="ECO:0007669"/>
    <property type="project" value="UniProtKB-ARBA"/>
</dbReference>
<dbReference type="GO" id="GO:0006265">
    <property type="term" value="P:DNA topological change"/>
    <property type="evidence" value="ECO:0000318"/>
    <property type="project" value="GO_Central"/>
</dbReference>
<dbReference type="CDD" id="cd00187">
    <property type="entry name" value="TOP4c"/>
    <property type="match status" value="1"/>
</dbReference>
<dbReference type="FunFam" id="3.30.1360.40:FF:000002">
    <property type="entry name" value="DNA gyrase subunit A"/>
    <property type="match status" value="1"/>
</dbReference>
<dbReference type="Gene3D" id="3.30.1360.40">
    <property type="match status" value="1"/>
</dbReference>
<dbReference type="Gene3D" id="2.120.10.90">
    <property type="entry name" value="DNA gyrase/topoisomerase IV, subunit A, C-terminal"/>
    <property type="match status" value="1"/>
</dbReference>
<dbReference type="Gene3D" id="3.90.199.10">
    <property type="entry name" value="Topoisomerase II, domain 5"/>
    <property type="match status" value="1"/>
</dbReference>
<dbReference type="Gene3D" id="1.10.268.10">
    <property type="entry name" value="Topoisomerase, domain 3"/>
    <property type="match status" value="1"/>
</dbReference>
<dbReference type="InterPro" id="IPR006691">
    <property type="entry name" value="GyrA/parC_rep"/>
</dbReference>
<dbReference type="InterPro" id="IPR035516">
    <property type="entry name" value="Gyrase/topoIV_suA_C"/>
</dbReference>
<dbReference type="InterPro" id="IPR013760">
    <property type="entry name" value="Topo_IIA-like_dom_sf"/>
</dbReference>
<dbReference type="InterPro" id="IPR013758">
    <property type="entry name" value="Topo_IIA_A/C_ab"/>
</dbReference>
<dbReference type="InterPro" id="IPR013757">
    <property type="entry name" value="Topo_IIA_A_a_sf"/>
</dbReference>
<dbReference type="InterPro" id="IPR002205">
    <property type="entry name" value="Topo_IIA_dom_A"/>
</dbReference>
<dbReference type="InterPro" id="IPR050220">
    <property type="entry name" value="Type_II_DNA_Topoisomerases"/>
</dbReference>
<dbReference type="NCBIfam" id="NF004044">
    <property type="entry name" value="PRK05561.1"/>
    <property type="match status" value="1"/>
</dbReference>
<dbReference type="PANTHER" id="PTHR43493:SF5">
    <property type="entry name" value="DNA GYRASE SUBUNIT A, CHLOROPLASTIC_MITOCHONDRIAL"/>
    <property type="match status" value="1"/>
</dbReference>
<dbReference type="PANTHER" id="PTHR43493">
    <property type="entry name" value="DNA GYRASE/TOPOISOMERASE SUBUNIT A"/>
    <property type="match status" value="1"/>
</dbReference>
<dbReference type="Pfam" id="PF03989">
    <property type="entry name" value="DNA_gyraseA_C"/>
    <property type="match status" value="3"/>
</dbReference>
<dbReference type="Pfam" id="PF00521">
    <property type="entry name" value="DNA_topoisoIV"/>
    <property type="match status" value="1"/>
</dbReference>
<dbReference type="SMART" id="SM00434">
    <property type="entry name" value="TOP4c"/>
    <property type="match status" value="1"/>
</dbReference>
<dbReference type="SUPFAM" id="SSF101904">
    <property type="entry name" value="GyrA/ParC C-terminal domain-like"/>
    <property type="match status" value="1"/>
</dbReference>
<dbReference type="SUPFAM" id="SSF56719">
    <property type="entry name" value="Type II DNA topoisomerase"/>
    <property type="match status" value="1"/>
</dbReference>
<dbReference type="PROSITE" id="PS52040">
    <property type="entry name" value="TOPO_IIA"/>
    <property type="match status" value="1"/>
</dbReference>
<organism>
    <name type="scientific">Synechocystis sp. (strain ATCC 27184 / PCC 6803 / Kazusa)</name>
    <dbReference type="NCBI Taxonomy" id="1111708"/>
    <lineage>
        <taxon>Bacteria</taxon>
        <taxon>Bacillati</taxon>
        <taxon>Cyanobacteriota</taxon>
        <taxon>Cyanophyceae</taxon>
        <taxon>Synechococcales</taxon>
        <taxon>Merismopediaceae</taxon>
        <taxon>Synechocystis</taxon>
    </lineage>
</organism>
<protein>
    <recommendedName>
        <fullName>DNA topoisomerase 4 subunit A</fullName>
        <ecNumber evidence="2">5.6.2.2</ecNumber>
    </recommendedName>
    <alternativeName>
        <fullName>Topoisomerase IV subunit A</fullName>
    </alternativeName>
</protein>